<accession>Q57H79</accession>
<feature type="chain" id="PRO_0000325562" description="Pantothenate kinase">
    <location>
        <begin position="1"/>
        <end position="316"/>
    </location>
</feature>
<feature type="binding site" evidence="1">
    <location>
        <begin position="95"/>
        <end position="102"/>
    </location>
    <ligand>
        <name>ATP</name>
        <dbReference type="ChEBI" id="CHEBI:30616"/>
    </ligand>
</feature>
<name>COAA_SALCH</name>
<evidence type="ECO:0000255" key="1">
    <source>
        <dbReference type="HAMAP-Rule" id="MF_00215"/>
    </source>
</evidence>
<evidence type="ECO:0000305" key="2"/>
<sequence>MSIKEQSLMTPYLQFDRSQWAALRDSVPMTLTEDEIAQLKGINEDLSLEEVAEIYLPLSRLLNFYISSNLRRQAVLEQFLGTNGQRIPYIISIAGSVAVGKSTTARVLQALLSRWPEHRRVELITTDGFLHPNQVLKERGLMKKKGFPESYDMHRLVKFVSDLKSGVPNVTAPVYSHLIYDVIPEGDKTVAQPDILILEGLNVLQSGMDYPHDPHHVFVSDFVDFSIYVDAPEELLQTWYINRFLKFREGAFTDPDSYFHNYAKLSKEEAVNTATSLWKEINWLNLKQNILPTRERASLIMTKSANHAVEQVRLRK</sequence>
<dbReference type="EC" id="2.7.1.33" evidence="1"/>
<dbReference type="EMBL" id="AE017220">
    <property type="protein sequence ID" value="AAX67933.1"/>
    <property type="status" value="ALT_INIT"/>
    <property type="molecule type" value="Genomic_DNA"/>
</dbReference>
<dbReference type="RefSeq" id="WP_000023069.1">
    <property type="nucleotide sequence ID" value="NC_006905.1"/>
</dbReference>
<dbReference type="SMR" id="Q57H79"/>
<dbReference type="KEGG" id="sec:SCH_4027"/>
<dbReference type="HOGENOM" id="CLU_053818_1_1_6"/>
<dbReference type="UniPathway" id="UPA00241">
    <property type="reaction ID" value="UER00352"/>
</dbReference>
<dbReference type="Proteomes" id="UP000000538">
    <property type="component" value="Chromosome"/>
</dbReference>
<dbReference type="GO" id="GO:0005737">
    <property type="term" value="C:cytoplasm"/>
    <property type="evidence" value="ECO:0007669"/>
    <property type="project" value="UniProtKB-SubCell"/>
</dbReference>
<dbReference type="GO" id="GO:0005524">
    <property type="term" value="F:ATP binding"/>
    <property type="evidence" value="ECO:0007669"/>
    <property type="project" value="UniProtKB-UniRule"/>
</dbReference>
<dbReference type="GO" id="GO:0004594">
    <property type="term" value="F:pantothenate kinase activity"/>
    <property type="evidence" value="ECO:0007669"/>
    <property type="project" value="UniProtKB-UniRule"/>
</dbReference>
<dbReference type="GO" id="GO:0015937">
    <property type="term" value="P:coenzyme A biosynthetic process"/>
    <property type="evidence" value="ECO:0007669"/>
    <property type="project" value="UniProtKB-UniRule"/>
</dbReference>
<dbReference type="CDD" id="cd02025">
    <property type="entry name" value="PanK"/>
    <property type="match status" value="1"/>
</dbReference>
<dbReference type="FunFam" id="3.40.50.300:FF:000242">
    <property type="entry name" value="Pantothenate kinase"/>
    <property type="match status" value="1"/>
</dbReference>
<dbReference type="Gene3D" id="3.40.50.300">
    <property type="entry name" value="P-loop containing nucleotide triphosphate hydrolases"/>
    <property type="match status" value="1"/>
</dbReference>
<dbReference type="HAMAP" id="MF_00215">
    <property type="entry name" value="Pantothen_kinase_1"/>
    <property type="match status" value="1"/>
</dbReference>
<dbReference type="InterPro" id="IPR027417">
    <property type="entry name" value="P-loop_NTPase"/>
</dbReference>
<dbReference type="InterPro" id="IPR004566">
    <property type="entry name" value="PanK"/>
</dbReference>
<dbReference type="InterPro" id="IPR006083">
    <property type="entry name" value="PRK/URK"/>
</dbReference>
<dbReference type="NCBIfam" id="TIGR00554">
    <property type="entry name" value="panK_bact"/>
    <property type="match status" value="1"/>
</dbReference>
<dbReference type="PANTHER" id="PTHR10285">
    <property type="entry name" value="URIDINE KINASE"/>
    <property type="match status" value="1"/>
</dbReference>
<dbReference type="Pfam" id="PF00485">
    <property type="entry name" value="PRK"/>
    <property type="match status" value="1"/>
</dbReference>
<dbReference type="PIRSF" id="PIRSF000545">
    <property type="entry name" value="Pantothenate_kin"/>
    <property type="match status" value="1"/>
</dbReference>
<dbReference type="SUPFAM" id="SSF52540">
    <property type="entry name" value="P-loop containing nucleoside triphosphate hydrolases"/>
    <property type="match status" value="1"/>
</dbReference>
<keyword id="KW-0067">ATP-binding</keyword>
<keyword id="KW-0173">Coenzyme A biosynthesis</keyword>
<keyword id="KW-0963">Cytoplasm</keyword>
<keyword id="KW-0418">Kinase</keyword>
<keyword id="KW-0547">Nucleotide-binding</keyword>
<keyword id="KW-0808">Transferase</keyword>
<protein>
    <recommendedName>
        <fullName evidence="1">Pantothenate kinase</fullName>
        <ecNumber evidence="1">2.7.1.33</ecNumber>
    </recommendedName>
    <alternativeName>
        <fullName evidence="1">Pantothenic acid kinase</fullName>
    </alternativeName>
</protein>
<reference key="1">
    <citation type="journal article" date="2005" name="Nucleic Acids Res.">
        <title>The genome sequence of Salmonella enterica serovar Choleraesuis, a highly invasive and resistant zoonotic pathogen.</title>
        <authorList>
            <person name="Chiu C.-H."/>
            <person name="Tang P."/>
            <person name="Chu C."/>
            <person name="Hu S."/>
            <person name="Bao Q."/>
            <person name="Yu J."/>
            <person name="Chou Y.-Y."/>
            <person name="Wang H.-S."/>
            <person name="Lee Y.-S."/>
        </authorList>
    </citation>
    <scope>NUCLEOTIDE SEQUENCE [LARGE SCALE GENOMIC DNA]</scope>
    <source>
        <strain>SC-B67</strain>
    </source>
</reference>
<gene>
    <name evidence="1" type="primary">coaA</name>
    <name type="ordered locus">SCH_4027</name>
</gene>
<organism>
    <name type="scientific">Salmonella choleraesuis (strain SC-B67)</name>
    <dbReference type="NCBI Taxonomy" id="321314"/>
    <lineage>
        <taxon>Bacteria</taxon>
        <taxon>Pseudomonadati</taxon>
        <taxon>Pseudomonadota</taxon>
        <taxon>Gammaproteobacteria</taxon>
        <taxon>Enterobacterales</taxon>
        <taxon>Enterobacteriaceae</taxon>
        <taxon>Salmonella</taxon>
    </lineage>
</organism>
<comment type="catalytic activity">
    <reaction evidence="1">
        <text>(R)-pantothenate + ATP = (R)-4'-phosphopantothenate + ADP + H(+)</text>
        <dbReference type="Rhea" id="RHEA:16373"/>
        <dbReference type="ChEBI" id="CHEBI:10986"/>
        <dbReference type="ChEBI" id="CHEBI:15378"/>
        <dbReference type="ChEBI" id="CHEBI:29032"/>
        <dbReference type="ChEBI" id="CHEBI:30616"/>
        <dbReference type="ChEBI" id="CHEBI:456216"/>
        <dbReference type="EC" id="2.7.1.33"/>
    </reaction>
</comment>
<comment type="pathway">
    <text evidence="1">Cofactor biosynthesis; coenzyme A biosynthesis; CoA from (R)-pantothenate: step 1/5.</text>
</comment>
<comment type="subcellular location">
    <subcellularLocation>
        <location evidence="1">Cytoplasm</location>
    </subcellularLocation>
</comment>
<comment type="similarity">
    <text evidence="1">Belongs to the prokaryotic pantothenate kinase family.</text>
</comment>
<comment type="sequence caution" evidence="2">
    <conflict type="erroneous initiation">
        <sequence resource="EMBL-CDS" id="AAX67933"/>
    </conflict>
</comment>
<proteinExistence type="inferred from homology"/>